<protein>
    <recommendedName>
        <fullName>N(6)-adenosine-methyltransferase non-catalytic subunit METTL14</fullName>
    </recommendedName>
    <alternativeName>
        <fullName>Methyltransferase-like protein 14</fullName>
    </alternativeName>
</protein>
<comment type="function">
    <text evidence="1 2">The METTL3-METTL14 heterodimer forms a N6-methyltransferase complex that methylates adenosine residues at the N(6) position of some mRNAs and regulates the circadian clock, differentiation of embryonic stem cells and cortical neurogenesis. In the heterodimer formed with mettl3, mettl14 constitutes the RNA-binding scaffold that recognizes the substrate rather than the catalytic core. N6-methyladenosine (m6A), which takes place at the 5'-[AG]GAC-3' consensus sites of some mRNAs, plays a role in mRNA stability and processing.</text>
</comment>
<comment type="subunit">
    <text evidence="2">Heterodimer; heterodimerizes with mettl3 to form an antiparallel heterodimer that constitutes an active methyltransferase. Component of the WMM complex, a N6-methyltransferase complex composed of a catalytic subcomplex, named MAC, and of an associated subcomplex, named MACOM. The MAC subcomplex is composed of mettl3 and mettl14.</text>
</comment>
<comment type="subcellular location">
    <subcellularLocation>
        <location evidence="1">Nucleus</location>
    </subcellularLocation>
</comment>
<comment type="similarity">
    <text evidence="3">Belongs to the MT-A70-like family.</text>
</comment>
<gene>
    <name type="primary">mettl14</name>
    <name type="ORF">zgc:77296</name>
</gene>
<keyword id="KW-0221">Differentiation</keyword>
<keyword id="KW-0539">Nucleus</keyword>
<keyword id="KW-1185">Reference proteome</keyword>
<keyword id="KW-0694">RNA-binding</keyword>
<keyword id="KW-0744">Spermatogenesis</keyword>
<dbReference type="EMBL" id="BC066377">
    <property type="protein sequence ID" value="AAH66377.1"/>
    <property type="molecule type" value="mRNA"/>
</dbReference>
<dbReference type="RefSeq" id="NP_996954.1">
    <property type="nucleotide sequence ID" value="NM_207071.1"/>
</dbReference>
<dbReference type="SMR" id="Q6NZ22"/>
<dbReference type="FunCoup" id="Q6NZ22">
    <property type="interactions" value="1215"/>
</dbReference>
<dbReference type="STRING" id="7955.ENSDARP00000093767"/>
<dbReference type="PaxDb" id="7955-ENSDARP00000093767"/>
<dbReference type="Ensembl" id="ENSDART00000102993">
    <property type="protein sequence ID" value="ENSDARP00000093767"/>
    <property type="gene ID" value="ENSDARG00000070278"/>
</dbReference>
<dbReference type="Ensembl" id="ENSDART00000180272">
    <property type="protein sequence ID" value="ENSDARP00000155942"/>
    <property type="gene ID" value="ENSDARG00000112383"/>
</dbReference>
<dbReference type="GeneID" id="404603"/>
<dbReference type="KEGG" id="dre:404603"/>
<dbReference type="AGR" id="ZFIN:ZDB-GENE-040426-2328"/>
<dbReference type="CTD" id="57721"/>
<dbReference type="ZFIN" id="ZDB-GENE-040426-2328">
    <property type="gene designation" value="mettl14"/>
</dbReference>
<dbReference type="eggNOG" id="KOG2097">
    <property type="taxonomic scope" value="Eukaryota"/>
</dbReference>
<dbReference type="HOGENOM" id="CLU_046318_1_0_1"/>
<dbReference type="InParanoid" id="Q6NZ22"/>
<dbReference type="OMA" id="FNSELYQ"/>
<dbReference type="OrthoDB" id="14833at2759"/>
<dbReference type="PhylomeDB" id="Q6NZ22"/>
<dbReference type="TreeFam" id="TF323641"/>
<dbReference type="PRO" id="PR:Q6NZ22"/>
<dbReference type="Proteomes" id="UP000000437">
    <property type="component" value="Alternate scaffold 1"/>
</dbReference>
<dbReference type="Proteomes" id="UP000000437">
    <property type="component" value="Chromosome 1"/>
</dbReference>
<dbReference type="Bgee" id="ENSDARG00000070278">
    <property type="expression patterns" value="Expressed in blastula and 21 other cell types or tissues"/>
</dbReference>
<dbReference type="GO" id="GO:0005634">
    <property type="term" value="C:nucleus"/>
    <property type="evidence" value="ECO:0000250"/>
    <property type="project" value="UniProtKB"/>
</dbReference>
<dbReference type="GO" id="GO:0036396">
    <property type="term" value="C:RNA N6-methyladenosine methyltransferase complex"/>
    <property type="evidence" value="ECO:0000250"/>
    <property type="project" value="UniProtKB"/>
</dbReference>
<dbReference type="GO" id="GO:0003729">
    <property type="term" value="F:mRNA binding"/>
    <property type="evidence" value="ECO:0000250"/>
    <property type="project" value="UniProtKB"/>
</dbReference>
<dbReference type="GO" id="GO:0001734">
    <property type="term" value="F:mRNA m(6)A methyltransferase activity"/>
    <property type="evidence" value="ECO:0000250"/>
    <property type="project" value="UniProtKB"/>
</dbReference>
<dbReference type="GO" id="GO:0021861">
    <property type="term" value="P:forebrain radial glial cell differentiation"/>
    <property type="evidence" value="ECO:0000250"/>
    <property type="project" value="UniProtKB"/>
</dbReference>
<dbReference type="GO" id="GO:0042063">
    <property type="term" value="P:gliogenesis"/>
    <property type="evidence" value="ECO:0000250"/>
    <property type="project" value="UniProtKB"/>
</dbReference>
<dbReference type="GO" id="GO:0061157">
    <property type="term" value="P:mRNA destabilization"/>
    <property type="evidence" value="ECO:0000250"/>
    <property type="project" value="UniProtKB"/>
</dbReference>
<dbReference type="GO" id="GO:0016556">
    <property type="term" value="P:mRNA modification"/>
    <property type="evidence" value="ECO:0000318"/>
    <property type="project" value="GO_Central"/>
</dbReference>
<dbReference type="GO" id="GO:0006397">
    <property type="term" value="P:mRNA processing"/>
    <property type="evidence" value="ECO:0000250"/>
    <property type="project" value="UniProtKB"/>
</dbReference>
<dbReference type="GO" id="GO:0000398">
    <property type="term" value="P:mRNA splicing, via spliceosome"/>
    <property type="evidence" value="ECO:0000250"/>
    <property type="project" value="UniProtKB"/>
</dbReference>
<dbReference type="GO" id="GO:0001510">
    <property type="term" value="P:RNA methylation"/>
    <property type="evidence" value="ECO:0000250"/>
    <property type="project" value="UniProtKB"/>
</dbReference>
<dbReference type="GO" id="GO:0007283">
    <property type="term" value="P:spermatogenesis"/>
    <property type="evidence" value="ECO:0000250"/>
    <property type="project" value="UniProtKB"/>
</dbReference>
<dbReference type="GO" id="GO:0019827">
    <property type="term" value="P:stem cell population maintenance"/>
    <property type="evidence" value="ECO:0000250"/>
    <property type="project" value="UniProtKB"/>
</dbReference>
<dbReference type="InterPro" id="IPR045123">
    <property type="entry name" value="METTL14-like"/>
</dbReference>
<dbReference type="InterPro" id="IPR007757">
    <property type="entry name" value="MT-A70-like"/>
</dbReference>
<dbReference type="InterPro" id="IPR029063">
    <property type="entry name" value="SAM-dependent_MTases_sf"/>
</dbReference>
<dbReference type="PANTHER" id="PTHR13107">
    <property type="entry name" value="N6-ADENOSINE-METHYLTRANSFERASE NON-CATALYTIC SUBUNIT"/>
    <property type="match status" value="1"/>
</dbReference>
<dbReference type="PANTHER" id="PTHR13107:SF0">
    <property type="entry name" value="N6-ADENOSINE-METHYLTRANSFERASE NON-CATALYTIC SUBUNIT"/>
    <property type="match status" value="1"/>
</dbReference>
<dbReference type="Pfam" id="PF05063">
    <property type="entry name" value="MT-A70"/>
    <property type="match status" value="1"/>
</dbReference>
<dbReference type="SUPFAM" id="SSF53335">
    <property type="entry name" value="S-adenosyl-L-methionine-dependent methyltransferases"/>
    <property type="match status" value="1"/>
</dbReference>
<dbReference type="PROSITE" id="PS51143">
    <property type="entry name" value="MT_A70"/>
    <property type="match status" value="1"/>
</dbReference>
<dbReference type="PROSITE" id="PS51592">
    <property type="entry name" value="SAM_MTA70L_2"/>
    <property type="match status" value="1"/>
</dbReference>
<name>MET14_DANRE</name>
<feature type="chain" id="PRO_0000325794" description="N(6)-adenosine-methyltransferase non-catalytic subunit METTL14">
    <location>
        <begin position="1"/>
        <end position="455"/>
    </location>
</feature>
<feature type="region of interest" description="Disordered" evidence="4">
    <location>
        <begin position="21"/>
        <end position="96"/>
    </location>
</feature>
<feature type="region of interest" description="Interaction with METTL3" evidence="2">
    <location>
        <begin position="134"/>
        <end position="135"/>
    </location>
</feature>
<feature type="region of interest" description="Interaction with METTL3" evidence="2">
    <location>
        <begin position="236"/>
        <end position="237"/>
    </location>
</feature>
<feature type="region of interest" description="Positively charged region required for RNA-binding" evidence="2">
    <location>
        <begin position="244"/>
        <end position="253"/>
    </location>
</feature>
<feature type="region of interest" description="Interaction with METTL3" evidence="2">
    <location>
        <begin position="254"/>
        <end position="257"/>
    </location>
</feature>
<feature type="region of interest" description="Interaction with METTL3" evidence="2">
    <location>
        <begin position="277"/>
        <end position="286"/>
    </location>
</feature>
<feature type="region of interest" description="Positively charged region required for RNA-binding" evidence="2">
    <location>
        <begin position="296"/>
        <end position="297"/>
    </location>
</feature>
<feature type="region of interest" description="Interaction with METTL3" evidence="2">
    <location>
        <begin position="307"/>
        <end position="311"/>
    </location>
</feature>
<feature type="region of interest" description="Disordered" evidence="4">
    <location>
        <begin position="392"/>
        <end position="455"/>
    </location>
</feature>
<feature type="compositionally biased region" description="Basic and acidic residues" evidence="4">
    <location>
        <begin position="37"/>
        <end position="51"/>
    </location>
</feature>
<feature type="compositionally biased region" description="Acidic residues" evidence="4">
    <location>
        <begin position="69"/>
        <end position="82"/>
    </location>
</feature>
<feature type="compositionally biased region" description="Gly residues" evidence="4">
    <location>
        <begin position="407"/>
        <end position="421"/>
    </location>
</feature>
<feature type="compositionally biased region" description="Basic and acidic residues" evidence="4">
    <location>
        <begin position="423"/>
        <end position="441"/>
    </location>
</feature>
<feature type="site" description="Interaction with METTL3" evidence="2">
    <location>
        <position position="145"/>
    </location>
</feature>
<feature type="site" description="Interaction with METTL3" evidence="2">
    <location>
        <position position="241"/>
    </location>
</feature>
<feature type="site" description="Interaction with METTL3" evidence="2">
    <location>
        <position position="244"/>
    </location>
</feature>
<feature type="site" description="Interaction with METTL3" evidence="2">
    <location>
        <position position="297"/>
    </location>
</feature>
<feature type="site" description="Interaction with METTL3" evidence="2">
    <location>
        <position position="398"/>
    </location>
</feature>
<accession>Q6NZ22</accession>
<evidence type="ECO:0000250" key="1">
    <source>
        <dbReference type="UniProtKB" id="Q3UIK4"/>
    </source>
</evidence>
<evidence type="ECO:0000250" key="2">
    <source>
        <dbReference type="UniProtKB" id="Q9HCE5"/>
    </source>
</evidence>
<evidence type="ECO:0000255" key="3">
    <source>
        <dbReference type="PROSITE-ProRule" id="PRU00489"/>
    </source>
</evidence>
<evidence type="ECO:0000256" key="4">
    <source>
        <dbReference type="SAM" id="MobiDB-lite"/>
    </source>
</evidence>
<reference key="1">
    <citation type="submission" date="2004-02" db="EMBL/GenBank/DDBJ databases">
        <authorList>
            <consortium name="NIH - Zebrafish Gene Collection (ZGC) project"/>
        </authorList>
    </citation>
    <scope>NUCLEOTIDE SEQUENCE [LARGE SCALE MRNA]</scope>
    <source>
        <tissue>Embryo</tissue>
    </source>
</reference>
<proteinExistence type="evidence at transcript level"/>
<organism>
    <name type="scientific">Danio rerio</name>
    <name type="common">Zebrafish</name>
    <name type="synonym">Brachydanio rerio</name>
    <dbReference type="NCBI Taxonomy" id="7955"/>
    <lineage>
        <taxon>Eukaryota</taxon>
        <taxon>Metazoa</taxon>
        <taxon>Chordata</taxon>
        <taxon>Craniata</taxon>
        <taxon>Vertebrata</taxon>
        <taxon>Euteleostomi</taxon>
        <taxon>Actinopterygii</taxon>
        <taxon>Neopterygii</taxon>
        <taxon>Teleostei</taxon>
        <taxon>Ostariophysi</taxon>
        <taxon>Cypriniformes</taxon>
        <taxon>Danionidae</taxon>
        <taxon>Danioninae</taxon>
        <taxon>Danio</taxon>
    </lineage>
</organism>
<sequence>MNSRLQEIRERQKLRRQLLAQQLGAESPDSIGAVLNSKDEQKEIEETRETCRASFDISVPGAKRKCLNEGEDPEEDVEEQKEDVEPQHQEESGPYEEVYKDSSTFLKGTQSLNPHNDYCQHFVDTGHRPQNFIRDGGLADRFEEYPKQRELIRLKDELISATNTPPMYLQADPDTFDLRELKCKFDVILIEPPLEEYYRESGIIANERFWNWDDIMKLNIEEISSIRSFVFLWCGSGEGLDLGRMCLRKWGFRRCEDICWIKTNKNNPGKTKTLDPKAVFQRTKEHCLMGIKGTVRRSTDGDFIHANVDIDLIITEEPEMGNIEKPVEIFHIIEHFCLGRRRLHLFGRDSTIRPGWLTVGPTLTNSNFNIEVYSTHFSEPNSYLSGCTEEIERLRPKSPPPKSMAERGGGAPRGGRGGPAAGRGDRGRERNRPNFRGDRGGFRGRGGPHRGFPPR</sequence>